<evidence type="ECO:0000255" key="1">
    <source>
        <dbReference type="HAMAP-Rule" id="MF_00148"/>
    </source>
</evidence>
<reference key="1">
    <citation type="journal article" date="2008" name="J. Bacteriol.">
        <title>Insights into the environmental resistance gene pool from the genome sequence of the multidrug-resistant environmental isolate Escherichia coli SMS-3-5.</title>
        <authorList>
            <person name="Fricke W.F."/>
            <person name="Wright M.S."/>
            <person name="Lindell A.H."/>
            <person name="Harkins D.M."/>
            <person name="Baker-Austin C."/>
            <person name="Ravel J."/>
            <person name="Stepanauskas R."/>
        </authorList>
    </citation>
    <scope>NUCLEOTIDE SEQUENCE [LARGE SCALE GENOMIC DNA]</scope>
    <source>
        <strain>SMS-3-5 / SECEC</strain>
    </source>
</reference>
<dbReference type="EC" id="3.2.2.27" evidence="1"/>
<dbReference type="EMBL" id="CP000970">
    <property type="protein sequence ID" value="ACB19854.1"/>
    <property type="molecule type" value="Genomic_DNA"/>
</dbReference>
<dbReference type="RefSeq" id="WP_001262723.1">
    <property type="nucleotide sequence ID" value="NC_010498.1"/>
</dbReference>
<dbReference type="SMR" id="B1LP93"/>
<dbReference type="GeneID" id="75206274"/>
<dbReference type="KEGG" id="ecm:EcSMS35_2733"/>
<dbReference type="HOGENOM" id="CLU_032162_3_0_6"/>
<dbReference type="Proteomes" id="UP000007011">
    <property type="component" value="Chromosome"/>
</dbReference>
<dbReference type="GO" id="GO:0005737">
    <property type="term" value="C:cytoplasm"/>
    <property type="evidence" value="ECO:0007669"/>
    <property type="project" value="UniProtKB-SubCell"/>
</dbReference>
<dbReference type="GO" id="GO:0004844">
    <property type="term" value="F:uracil DNA N-glycosylase activity"/>
    <property type="evidence" value="ECO:0007669"/>
    <property type="project" value="UniProtKB-UniRule"/>
</dbReference>
<dbReference type="GO" id="GO:0097510">
    <property type="term" value="P:base-excision repair, AP site formation via deaminated base removal"/>
    <property type="evidence" value="ECO:0007669"/>
    <property type="project" value="TreeGrafter"/>
</dbReference>
<dbReference type="CDD" id="cd10027">
    <property type="entry name" value="UDG-F1-like"/>
    <property type="match status" value="1"/>
</dbReference>
<dbReference type="FunFam" id="3.40.470.10:FF:000001">
    <property type="entry name" value="Uracil-DNA glycosylase"/>
    <property type="match status" value="1"/>
</dbReference>
<dbReference type="Gene3D" id="3.40.470.10">
    <property type="entry name" value="Uracil-DNA glycosylase-like domain"/>
    <property type="match status" value="1"/>
</dbReference>
<dbReference type="HAMAP" id="MF_00148">
    <property type="entry name" value="UDG"/>
    <property type="match status" value="1"/>
</dbReference>
<dbReference type="InterPro" id="IPR002043">
    <property type="entry name" value="UDG_fam1"/>
</dbReference>
<dbReference type="InterPro" id="IPR018085">
    <property type="entry name" value="Ura-DNA_Glyclase_AS"/>
</dbReference>
<dbReference type="InterPro" id="IPR005122">
    <property type="entry name" value="Uracil-DNA_glycosylase-like"/>
</dbReference>
<dbReference type="InterPro" id="IPR036895">
    <property type="entry name" value="Uracil-DNA_glycosylase-like_sf"/>
</dbReference>
<dbReference type="NCBIfam" id="NF003588">
    <property type="entry name" value="PRK05254.1-1"/>
    <property type="match status" value="1"/>
</dbReference>
<dbReference type="NCBIfam" id="NF003589">
    <property type="entry name" value="PRK05254.1-2"/>
    <property type="match status" value="1"/>
</dbReference>
<dbReference type="NCBIfam" id="NF003591">
    <property type="entry name" value="PRK05254.1-4"/>
    <property type="match status" value="1"/>
</dbReference>
<dbReference type="NCBIfam" id="NF003592">
    <property type="entry name" value="PRK05254.1-5"/>
    <property type="match status" value="1"/>
</dbReference>
<dbReference type="NCBIfam" id="TIGR00628">
    <property type="entry name" value="ung"/>
    <property type="match status" value="1"/>
</dbReference>
<dbReference type="PANTHER" id="PTHR11264">
    <property type="entry name" value="URACIL-DNA GLYCOSYLASE"/>
    <property type="match status" value="1"/>
</dbReference>
<dbReference type="PANTHER" id="PTHR11264:SF0">
    <property type="entry name" value="URACIL-DNA GLYCOSYLASE"/>
    <property type="match status" value="1"/>
</dbReference>
<dbReference type="Pfam" id="PF03167">
    <property type="entry name" value="UDG"/>
    <property type="match status" value="1"/>
</dbReference>
<dbReference type="SMART" id="SM00986">
    <property type="entry name" value="UDG"/>
    <property type="match status" value="1"/>
</dbReference>
<dbReference type="SMART" id="SM00987">
    <property type="entry name" value="UreE_C"/>
    <property type="match status" value="1"/>
</dbReference>
<dbReference type="SUPFAM" id="SSF52141">
    <property type="entry name" value="Uracil-DNA glycosylase-like"/>
    <property type="match status" value="1"/>
</dbReference>
<dbReference type="PROSITE" id="PS00130">
    <property type="entry name" value="U_DNA_GLYCOSYLASE"/>
    <property type="match status" value="1"/>
</dbReference>
<gene>
    <name evidence="1" type="primary">ung</name>
    <name type="ordered locus">EcSMS35_2733</name>
</gene>
<keyword id="KW-0963">Cytoplasm</keyword>
<keyword id="KW-0227">DNA damage</keyword>
<keyword id="KW-0234">DNA repair</keyword>
<keyword id="KW-0378">Hydrolase</keyword>
<name>UNG_ECOSM</name>
<feature type="chain" id="PRO_1000199778" description="Uracil-DNA glycosylase">
    <location>
        <begin position="1"/>
        <end position="229"/>
    </location>
</feature>
<feature type="active site" description="Proton acceptor" evidence="1">
    <location>
        <position position="64"/>
    </location>
</feature>
<organism>
    <name type="scientific">Escherichia coli (strain SMS-3-5 / SECEC)</name>
    <dbReference type="NCBI Taxonomy" id="439855"/>
    <lineage>
        <taxon>Bacteria</taxon>
        <taxon>Pseudomonadati</taxon>
        <taxon>Pseudomonadota</taxon>
        <taxon>Gammaproteobacteria</taxon>
        <taxon>Enterobacterales</taxon>
        <taxon>Enterobacteriaceae</taxon>
        <taxon>Escherichia</taxon>
    </lineage>
</organism>
<protein>
    <recommendedName>
        <fullName evidence="1">Uracil-DNA glycosylase</fullName>
        <shortName evidence="1">UDG</shortName>
        <ecNumber evidence="1">3.2.2.27</ecNumber>
    </recommendedName>
</protein>
<accession>B1LP93</accession>
<comment type="function">
    <text evidence="1">Excises uracil residues from the DNA which can arise as a result of misincorporation of dUMP residues by DNA polymerase or due to deamination of cytosine.</text>
</comment>
<comment type="catalytic activity">
    <reaction evidence="1">
        <text>Hydrolyzes single-stranded DNA or mismatched double-stranded DNA and polynucleotides, releasing free uracil.</text>
        <dbReference type="EC" id="3.2.2.27"/>
    </reaction>
</comment>
<comment type="subcellular location">
    <subcellularLocation>
        <location evidence="1">Cytoplasm</location>
    </subcellularLocation>
</comment>
<comment type="similarity">
    <text evidence="1">Belongs to the uracil-DNA glycosylase (UDG) superfamily. UNG family.</text>
</comment>
<proteinExistence type="inferred from homology"/>
<sequence>MANELTWHDVLAEEKQQPYFLNTLQTVASERQSGVTIYPPQKDVFNAFRFTELGDVKVVILGQDPYHGPGQAHGLAFSVRPGIATPPSLLNMYKELENTIPGFTRPNHGYLESWARQGVLLLNTVLTVRAGQAHSHASLGWETFTDKVISLINQHREGVVFLLWGSHAQKKGAIIDKQRHHVLKAPHPSPLSAHRGFFGCNHFVLANQWLEQRGETPIDWMPVLPAESE</sequence>